<feature type="signal peptide" evidence="3">
    <location>
        <begin position="1"/>
        <end position="30"/>
    </location>
</feature>
<feature type="chain" id="PRO_0000299548" description="Chondroadherin-like protein">
    <location>
        <begin position="31"/>
        <end position="762"/>
    </location>
</feature>
<feature type="domain" description="LRRNT 1">
    <location>
        <begin position="31"/>
        <end position="62"/>
    </location>
</feature>
<feature type="repeat" description="LRR 1">
    <location>
        <begin position="87"/>
        <end position="108"/>
    </location>
</feature>
<feature type="repeat" description="LRR 2">
    <location>
        <begin position="111"/>
        <end position="132"/>
    </location>
</feature>
<feature type="repeat" description="LRR 3">
    <location>
        <begin position="135"/>
        <end position="156"/>
    </location>
</feature>
<feature type="repeat" description="LRR 4">
    <location>
        <begin position="159"/>
        <end position="180"/>
    </location>
</feature>
<feature type="repeat" description="LRR 5">
    <location>
        <begin position="183"/>
        <end position="204"/>
    </location>
</feature>
<feature type="repeat" description="LRR 6">
    <location>
        <begin position="207"/>
        <end position="228"/>
    </location>
</feature>
<feature type="repeat" description="LRR 7">
    <location>
        <begin position="231"/>
        <end position="252"/>
    </location>
</feature>
<feature type="repeat" description="LRR 8">
    <location>
        <begin position="255"/>
        <end position="276"/>
    </location>
</feature>
<feature type="repeat" description="LRR 9">
    <location>
        <begin position="279"/>
        <end position="300"/>
    </location>
</feature>
<feature type="domain" description="LRRCT 1">
    <location>
        <begin position="310"/>
        <end position="359"/>
    </location>
</feature>
<feature type="domain" description="LRRNT 2">
    <location>
        <begin position="387"/>
        <end position="425"/>
    </location>
</feature>
<feature type="repeat" description="LRR 10">
    <location>
        <begin position="426"/>
        <end position="447"/>
    </location>
</feature>
<feature type="repeat" description="LRR 11">
    <location>
        <begin position="450"/>
        <end position="471"/>
    </location>
</feature>
<feature type="repeat" description="LRR 12">
    <location>
        <begin position="474"/>
        <end position="495"/>
    </location>
</feature>
<feature type="repeat" description="LRR 13">
    <location>
        <begin position="498"/>
        <end position="519"/>
    </location>
</feature>
<feature type="repeat" description="LRR 14">
    <location>
        <begin position="522"/>
        <end position="543"/>
    </location>
</feature>
<feature type="repeat" description="LRR 15">
    <location>
        <begin position="546"/>
        <end position="566"/>
    </location>
</feature>
<feature type="repeat" description="LRR 16">
    <location>
        <begin position="570"/>
        <end position="591"/>
    </location>
</feature>
<feature type="repeat" description="LRR 17">
    <location>
        <begin position="594"/>
        <end position="615"/>
    </location>
</feature>
<feature type="repeat" description="LRR 18">
    <location>
        <begin position="619"/>
        <end position="640"/>
    </location>
</feature>
<feature type="repeat" description="LRR 19">
    <location>
        <begin position="644"/>
        <end position="665"/>
    </location>
</feature>
<feature type="domain" description="LRRCT 2">
    <location>
        <begin position="675"/>
        <end position="724"/>
    </location>
</feature>
<feature type="region of interest" description="Disordered" evidence="4">
    <location>
        <begin position="364"/>
        <end position="390"/>
    </location>
</feature>
<feature type="region of interest" description="Disordered" evidence="4">
    <location>
        <begin position="728"/>
        <end position="762"/>
    </location>
</feature>
<feature type="compositionally biased region" description="Pro residues" evidence="4">
    <location>
        <begin position="377"/>
        <end position="386"/>
    </location>
</feature>
<feature type="compositionally biased region" description="Basic residues" evidence="4">
    <location>
        <begin position="728"/>
        <end position="745"/>
    </location>
</feature>
<feature type="glycosylation site" description="N-linked (GlcNAc...) asparagine" evidence="3">
    <location>
        <position position="52"/>
    </location>
</feature>
<feature type="glycosylation site" description="N-linked (GlcNAc...) asparagine" evidence="3">
    <location>
        <position position="626"/>
    </location>
</feature>
<feature type="disulfide bond" evidence="1">
    <location>
        <begin position="396"/>
        <end position="411"/>
    </location>
</feature>
<feature type="disulfide bond" evidence="1">
    <location>
        <begin position="679"/>
        <end position="722"/>
    </location>
</feature>
<feature type="disulfide bond" evidence="1">
    <location>
        <begin position="681"/>
        <end position="701"/>
    </location>
</feature>
<feature type="splice variant" id="VSP_027735" description="In isoform 2." evidence="6">
    <location>
        <begin position="662"/>
        <end position="737"/>
    </location>
</feature>
<feature type="sequence variant" id="VAR_059805" description="In dbSNP:rs9619955.">
    <original>Q</original>
    <variation>R</variation>
    <location>
        <position position="710"/>
    </location>
</feature>
<feature type="sequence variant" id="VAR_061805" description="In dbSNP:rs9619954.">
    <original>D</original>
    <variation>N</variation>
    <location>
        <position position="721"/>
    </location>
</feature>
<feature type="sequence conflict" description="In Ref. 3; AAH40188." evidence="7" ref="3">
    <original>P</original>
    <variation>T</variation>
    <location>
        <position position="11"/>
    </location>
</feature>
<feature type="sequence conflict" description="In Ref. 3; AAH40188." evidence="7" ref="3">
    <original>A</original>
    <variation>T</variation>
    <location>
        <position position="30"/>
    </location>
</feature>
<feature type="sequence conflict" description="In Ref. 3; AAH40188." evidence="7" ref="3">
    <original>E</original>
    <variation>G</variation>
    <location>
        <position position="148"/>
    </location>
</feature>
<feature type="sequence conflict" description="In Ref. 3; AAH68590." evidence="7" ref="3">
    <original>P</original>
    <variation>R</variation>
    <location>
        <position position="424"/>
    </location>
</feature>
<feature type="sequence conflict" description="In Ref. 3; AAH40188." evidence="7" ref="3">
    <original>L</original>
    <variation>V</variation>
    <location>
        <position position="478"/>
    </location>
</feature>
<feature type="sequence conflict" description="In Ref. 3; AAH48421." evidence="7" ref="3">
    <original>R</original>
    <variation>S</variation>
    <location>
        <position position="508"/>
    </location>
</feature>
<feature type="sequence conflict" description="In Ref. 3; AAH68590." evidence="7" ref="3">
    <original>Q</original>
    <variation>H</variation>
    <location>
        <position position="529"/>
    </location>
</feature>
<keyword id="KW-0025">Alternative splicing</keyword>
<keyword id="KW-1015">Disulfide bond</keyword>
<keyword id="KW-0272">Extracellular matrix</keyword>
<keyword id="KW-0325">Glycoprotein</keyword>
<keyword id="KW-0433">Leucine-rich repeat</keyword>
<keyword id="KW-1267">Proteomics identification</keyword>
<keyword id="KW-1185">Reference proteome</keyword>
<keyword id="KW-0677">Repeat</keyword>
<keyword id="KW-0964">Secreted</keyword>
<keyword id="KW-0732">Signal</keyword>
<dbReference type="EMBL" id="AL035681">
    <property type="status" value="NOT_ANNOTATED_CDS"/>
    <property type="molecule type" value="Genomic_DNA"/>
</dbReference>
<dbReference type="EMBL" id="CH471095">
    <property type="protein sequence ID" value="EAW60419.1"/>
    <property type="molecule type" value="Genomic_DNA"/>
</dbReference>
<dbReference type="EMBL" id="BC012882">
    <property type="protein sequence ID" value="AAH12882.1"/>
    <property type="molecule type" value="mRNA"/>
</dbReference>
<dbReference type="EMBL" id="BC019839">
    <property type="protein sequence ID" value="AAH19839.1"/>
    <property type="status" value="ALT_FRAME"/>
    <property type="molecule type" value="mRNA"/>
</dbReference>
<dbReference type="EMBL" id="BC040188">
    <property type="protein sequence ID" value="AAH40188.1"/>
    <property type="molecule type" value="mRNA"/>
</dbReference>
<dbReference type="EMBL" id="BC048421">
    <property type="protein sequence ID" value="AAH48421.1"/>
    <property type="molecule type" value="mRNA"/>
</dbReference>
<dbReference type="EMBL" id="BC068590">
    <property type="protein sequence ID" value="AAH68590.1"/>
    <property type="status" value="ALT_INIT"/>
    <property type="molecule type" value="mRNA"/>
</dbReference>
<dbReference type="CCDS" id="CCDS46715.1">
    <molecule id="Q6NUI6-1"/>
</dbReference>
<dbReference type="RefSeq" id="NP_612490.1">
    <molecule id="Q6NUI6-1"/>
    <property type="nucleotide sequence ID" value="NM_138481.2"/>
</dbReference>
<dbReference type="SMR" id="Q6NUI6"/>
<dbReference type="BioGRID" id="127285">
    <property type="interactions" value="1"/>
</dbReference>
<dbReference type="FunCoup" id="Q6NUI6">
    <property type="interactions" value="84"/>
</dbReference>
<dbReference type="STRING" id="9606.ENSP00000216241"/>
<dbReference type="GlyCosmos" id="Q6NUI6">
    <property type="glycosylation" value="2 sites, No reported glycans"/>
</dbReference>
<dbReference type="GlyGen" id="Q6NUI6">
    <property type="glycosylation" value="2 sites"/>
</dbReference>
<dbReference type="iPTMnet" id="Q6NUI6"/>
<dbReference type="PhosphoSitePlus" id="Q6NUI6"/>
<dbReference type="BioMuta" id="CHADL"/>
<dbReference type="DMDM" id="158563972"/>
<dbReference type="MassIVE" id="Q6NUI6"/>
<dbReference type="PaxDb" id="9606-ENSP00000216241"/>
<dbReference type="PeptideAtlas" id="Q6NUI6"/>
<dbReference type="ProteomicsDB" id="66680">
    <molecule id="Q6NUI6-1"/>
</dbReference>
<dbReference type="ProteomicsDB" id="66681">
    <molecule id="Q6NUI6-2"/>
</dbReference>
<dbReference type="Antibodypedia" id="332">
    <property type="antibodies" value="76 antibodies from 18 providers"/>
</dbReference>
<dbReference type="DNASU" id="150356"/>
<dbReference type="Ensembl" id="ENST00000216241.14">
    <molecule id="Q6NUI6-1"/>
    <property type="protein sequence ID" value="ENSP00000216241.9"/>
    <property type="gene ID" value="ENSG00000100399.16"/>
</dbReference>
<dbReference type="GeneID" id="150356"/>
<dbReference type="KEGG" id="hsa:150356"/>
<dbReference type="MANE-Select" id="ENST00000216241.14">
    <property type="protein sequence ID" value="ENSP00000216241.9"/>
    <property type="RefSeq nucleotide sequence ID" value="NM_138481.2"/>
    <property type="RefSeq protein sequence ID" value="NP_612490.1"/>
</dbReference>
<dbReference type="UCSC" id="uc003azq.5">
    <molecule id="Q6NUI6-1"/>
    <property type="organism name" value="human"/>
</dbReference>
<dbReference type="AGR" id="HGNC:25165"/>
<dbReference type="CTD" id="150356"/>
<dbReference type="DisGeNET" id="150356"/>
<dbReference type="GeneCards" id="CHADL"/>
<dbReference type="HGNC" id="HGNC:25165">
    <property type="gene designation" value="CHADL"/>
</dbReference>
<dbReference type="HPA" id="ENSG00000100399">
    <property type="expression patterns" value="Tissue enriched (brain)"/>
</dbReference>
<dbReference type="MIM" id="616236">
    <property type="type" value="gene"/>
</dbReference>
<dbReference type="neXtProt" id="NX_Q6NUI6"/>
<dbReference type="OpenTargets" id="ENSG00000100399"/>
<dbReference type="PharmGKB" id="PA162382224"/>
<dbReference type="VEuPathDB" id="HostDB:ENSG00000100399"/>
<dbReference type="eggNOG" id="KOG0619">
    <property type="taxonomic scope" value="Eukaryota"/>
</dbReference>
<dbReference type="GeneTree" id="ENSGT00940000154464"/>
<dbReference type="HOGENOM" id="CLU_022061_0_0_1"/>
<dbReference type="InParanoid" id="Q6NUI6"/>
<dbReference type="OMA" id="EAQHATC"/>
<dbReference type="OrthoDB" id="643377at2759"/>
<dbReference type="PAN-GO" id="Q6NUI6">
    <property type="GO annotations" value="2 GO annotations based on evolutionary models"/>
</dbReference>
<dbReference type="PhylomeDB" id="Q6NUI6"/>
<dbReference type="TreeFam" id="TF337463"/>
<dbReference type="PathwayCommons" id="Q6NUI6"/>
<dbReference type="BioGRID-ORCS" id="150356">
    <property type="hits" value="10 hits in 1142 CRISPR screens"/>
</dbReference>
<dbReference type="ChiTaRS" id="CHADL">
    <property type="organism name" value="human"/>
</dbReference>
<dbReference type="GenomeRNAi" id="150356"/>
<dbReference type="Pharos" id="Q6NUI6">
    <property type="development level" value="Tbio"/>
</dbReference>
<dbReference type="PRO" id="PR:Q6NUI6"/>
<dbReference type="Proteomes" id="UP000005640">
    <property type="component" value="Chromosome 22"/>
</dbReference>
<dbReference type="RNAct" id="Q6NUI6">
    <property type="molecule type" value="protein"/>
</dbReference>
<dbReference type="Bgee" id="ENSG00000100399">
    <property type="expression patterns" value="Expressed in C1 segment of cervical spinal cord and 112 other cell types or tissues"/>
</dbReference>
<dbReference type="ExpressionAtlas" id="Q6NUI6">
    <property type="expression patterns" value="baseline and differential"/>
</dbReference>
<dbReference type="GO" id="GO:0062023">
    <property type="term" value="C:collagen-containing extracellular matrix"/>
    <property type="evidence" value="ECO:0000314"/>
    <property type="project" value="UniProtKB"/>
</dbReference>
<dbReference type="GO" id="GO:0031012">
    <property type="term" value="C:extracellular matrix"/>
    <property type="evidence" value="ECO:0000318"/>
    <property type="project" value="GO_Central"/>
</dbReference>
<dbReference type="GO" id="GO:0005615">
    <property type="term" value="C:extracellular space"/>
    <property type="evidence" value="ECO:0000318"/>
    <property type="project" value="GO_Central"/>
</dbReference>
<dbReference type="GO" id="GO:0005518">
    <property type="term" value="F:collagen binding"/>
    <property type="evidence" value="ECO:0000314"/>
    <property type="project" value="UniProtKB"/>
</dbReference>
<dbReference type="GO" id="GO:0098633">
    <property type="term" value="F:collagen fibril binding"/>
    <property type="evidence" value="ECO:0000314"/>
    <property type="project" value="UniProtKB"/>
</dbReference>
<dbReference type="GO" id="GO:0030021">
    <property type="term" value="F:extracellular matrix structural constituent conferring compression resistance"/>
    <property type="evidence" value="ECO:0000250"/>
    <property type="project" value="BHF-UCL"/>
</dbReference>
<dbReference type="GO" id="GO:0032331">
    <property type="term" value="P:negative regulation of chondrocyte differentiation"/>
    <property type="evidence" value="ECO:0000250"/>
    <property type="project" value="UniProtKB"/>
</dbReference>
<dbReference type="GO" id="GO:1904027">
    <property type="term" value="P:negative regulation of collagen fibril organization"/>
    <property type="evidence" value="ECO:0000314"/>
    <property type="project" value="UniProtKB"/>
</dbReference>
<dbReference type="FunFam" id="3.80.10.10:FF:000059">
    <property type="entry name" value="Chondroadherin like"/>
    <property type="match status" value="1"/>
</dbReference>
<dbReference type="FunFam" id="3.80.10.10:FF:000368">
    <property type="entry name" value="Chondroadherin like"/>
    <property type="match status" value="1"/>
</dbReference>
<dbReference type="FunFam" id="3.80.10.10:FF:000311">
    <property type="entry name" value="Chondroadherin-like a"/>
    <property type="match status" value="1"/>
</dbReference>
<dbReference type="Gene3D" id="3.80.10.10">
    <property type="entry name" value="Ribonuclease Inhibitor"/>
    <property type="match status" value="2"/>
</dbReference>
<dbReference type="InterPro" id="IPR000483">
    <property type="entry name" value="Cys-rich_flank_reg_C"/>
</dbReference>
<dbReference type="InterPro" id="IPR001611">
    <property type="entry name" value="Leu-rich_rpt"/>
</dbReference>
<dbReference type="InterPro" id="IPR003591">
    <property type="entry name" value="Leu-rich_rpt_typical-subtyp"/>
</dbReference>
<dbReference type="InterPro" id="IPR032675">
    <property type="entry name" value="LRR_dom_sf"/>
</dbReference>
<dbReference type="InterPro" id="IPR050541">
    <property type="entry name" value="LRR_TM_domain-containing"/>
</dbReference>
<dbReference type="InterPro" id="IPR000372">
    <property type="entry name" value="LRRNT"/>
</dbReference>
<dbReference type="PANTHER" id="PTHR24369">
    <property type="entry name" value="ANTIGEN BSP, PUTATIVE-RELATED"/>
    <property type="match status" value="1"/>
</dbReference>
<dbReference type="PANTHER" id="PTHR24369:SF211">
    <property type="entry name" value="LEUCINE-RICH REPEAT-CONTAINING PROTEIN 15-LIKE"/>
    <property type="match status" value="1"/>
</dbReference>
<dbReference type="Pfam" id="PF13855">
    <property type="entry name" value="LRR_8"/>
    <property type="match status" value="6"/>
</dbReference>
<dbReference type="SMART" id="SM00364">
    <property type="entry name" value="LRR_BAC"/>
    <property type="match status" value="9"/>
</dbReference>
<dbReference type="SMART" id="SM00369">
    <property type="entry name" value="LRR_TYP"/>
    <property type="match status" value="19"/>
</dbReference>
<dbReference type="SMART" id="SM00082">
    <property type="entry name" value="LRRCT"/>
    <property type="match status" value="2"/>
</dbReference>
<dbReference type="SMART" id="SM00013">
    <property type="entry name" value="LRRNT"/>
    <property type="match status" value="2"/>
</dbReference>
<dbReference type="SUPFAM" id="SSF52058">
    <property type="entry name" value="L domain-like"/>
    <property type="match status" value="2"/>
</dbReference>
<dbReference type="PROSITE" id="PS51450">
    <property type="entry name" value="LRR"/>
    <property type="match status" value="18"/>
</dbReference>
<evidence type="ECO:0000250" key="1"/>
<evidence type="ECO:0000250" key="2">
    <source>
        <dbReference type="UniProtKB" id="E9Q7T7"/>
    </source>
</evidence>
<evidence type="ECO:0000255" key="3"/>
<evidence type="ECO:0000256" key="4">
    <source>
        <dbReference type="SAM" id="MobiDB-lite"/>
    </source>
</evidence>
<evidence type="ECO:0000269" key="5">
    <source>
    </source>
</evidence>
<evidence type="ECO:0000303" key="6">
    <source>
    </source>
</evidence>
<evidence type="ECO:0000305" key="7"/>
<sequence length="762" mass="82388">MEGPRSSTHVPLVLPLLVLLLLAPARQAAAQRCPQACICDNSRRHVACRYQNLTEVPDAIPELTQRLDLQGNLLKVIPAAAFQGVPHLTHLDLRHCEVELVAEGAFRGLGRLLLLNLASNHLRELPQEALDGLGSLRRLELEGNALEELRPGTFGALGALATLNLAHNALVYLPAMAFQGLLRVRWLRLSHNALSVLAPEALAGLPALRRLSLHHNELQALPGPVLSQARGLARLELGHNPLTYAGEEDGLALPGLRELLLDGGALQALGPRAFAHCPRLHTLDLRGNQLDTLPPLQGPGQLRRLRLQGNPLWCGCQARPLLEWLARARVRSDGACQGPRRLRGEALDALRPWDLRCPGDAAQEEEELEERAVAGPRAPPRGPPRGPGEERAVAPCPRACVCVPESRHSSCEGCGLQAVPRGFPSDTQLLDLRRNHFPSVPRAAFPGLGHLVSLHLQHCGIAELEAGALAGLGRLIYLYLSDNQLAGLSAAALEGAPRLGYLYLERNRFLQVPGAALRALPSLFSLHLQDNAVDRLAPGDLGRTRALRWVYLSGNRITEVSLGALGPARELEKLHLDRNQLREVPTGALEGLPALLELQLSGNPLRALRDGAFQPVGRSLQHLFLNSSGLEQICPGAFSGLGPGLQSLHLQKNQLRALPALPSLSQLELIDLSSNPFHCDCQLLPLHRWLTGLNLRVGATCATPPNARGQRVKAAAAVFEDCPGWAARKAKRTPASRPSARRTPIKGRQCGADKVGKEKGRL</sequence>
<gene>
    <name type="primary">CHADL</name>
    <name type="synonym">SLRR4B</name>
</gene>
<comment type="function">
    <text evidence="5">Potential negative modulator of chondrocyte differentiation. Inhibits collagen fibrillogenesis in vitro. May influence chondrocyte's differentiation by acting on its cellular collagenous microenvironment.</text>
</comment>
<comment type="subunit">
    <text evidence="5">Associates with collagen and binds to collagen fibrils.</text>
</comment>
<comment type="subcellular location">
    <subcellularLocation>
        <location evidence="5">Secreted</location>
    </subcellularLocation>
    <subcellularLocation>
        <location evidence="2">Secreted</location>
        <location evidence="2">Extracellular space</location>
        <location evidence="2">Extracellular matrix</location>
    </subcellularLocation>
</comment>
<comment type="alternative products">
    <event type="alternative splicing"/>
    <isoform>
        <id>Q6NUI6-1</id>
        <name>1</name>
        <sequence type="displayed"/>
    </isoform>
    <isoform>
        <id>Q6NUI6-2</id>
        <name>2</name>
        <sequence type="described" ref="VSP_027735"/>
    </isoform>
</comment>
<comment type="similarity">
    <text evidence="7">Belongs to the small leucine-rich proteoglycan (SLRP) family. SLRP class IV subfamily.</text>
</comment>
<comment type="sequence caution" evidence="7">
    <conflict type="frameshift">
        <sequence resource="EMBL-CDS" id="AAH19839"/>
    </conflict>
</comment>
<comment type="sequence caution" evidence="7">
    <conflict type="erroneous initiation">
        <sequence resource="EMBL-CDS" id="AAH68590"/>
    </conflict>
    <text>Extended N-terminus.</text>
</comment>
<reference key="1">
    <citation type="journal article" date="1999" name="Nature">
        <title>The DNA sequence of human chromosome 22.</title>
        <authorList>
            <person name="Dunham I."/>
            <person name="Hunt A.R."/>
            <person name="Collins J.E."/>
            <person name="Bruskiewich R."/>
            <person name="Beare D.M."/>
            <person name="Clamp M."/>
            <person name="Smink L.J."/>
            <person name="Ainscough R."/>
            <person name="Almeida J.P."/>
            <person name="Babbage A.K."/>
            <person name="Bagguley C."/>
            <person name="Bailey J."/>
            <person name="Barlow K.F."/>
            <person name="Bates K.N."/>
            <person name="Beasley O.P."/>
            <person name="Bird C.P."/>
            <person name="Blakey S.E."/>
            <person name="Bridgeman A.M."/>
            <person name="Buck D."/>
            <person name="Burgess J."/>
            <person name="Burrill W.D."/>
            <person name="Burton J."/>
            <person name="Carder C."/>
            <person name="Carter N.P."/>
            <person name="Chen Y."/>
            <person name="Clark G."/>
            <person name="Clegg S.M."/>
            <person name="Cobley V.E."/>
            <person name="Cole C.G."/>
            <person name="Collier R.E."/>
            <person name="Connor R."/>
            <person name="Conroy D."/>
            <person name="Corby N.R."/>
            <person name="Coville G.J."/>
            <person name="Cox A.V."/>
            <person name="Davis J."/>
            <person name="Dawson E."/>
            <person name="Dhami P.D."/>
            <person name="Dockree C."/>
            <person name="Dodsworth S.J."/>
            <person name="Durbin R.M."/>
            <person name="Ellington A.G."/>
            <person name="Evans K.L."/>
            <person name="Fey J.M."/>
            <person name="Fleming K."/>
            <person name="French L."/>
            <person name="Garner A.A."/>
            <person name="Gilbert J.G.R."/>
            <person name="Goward M.E."/>
            <person name="Grafham D.V."/>
            <person name="Griffiths M.N.D."/>
            <person name="Hall C."/>
            <person name="Hall R.E."/>
            <person name="Hall-Tamlyn G."/>
            <person name="Heathcott R.W."/>
            <person name="Ho S."/>
            <person name="Holmes S."/>
            <person name="Hunt S.E."/>
            <person name="Jones M.C."/>
            <person name="Kershaw J."/>
            <person name="Kimberley A.M."/>
            <person name="King A."/>
            <person name="Laird G.K."/>
            <person name="Langford C.F."/>
            <person name="Leversha M.A."/>
            <person name="Lloyd C."/>
            <person name="Lloyd D.M."/>
            <person name="Martyn I.D."/>
            <person name="Mashreghi-Mohammadi M."/>
            <person name="Matthews L.H."/>
            <person name="Mccann O.T."/>
            <person name="Mcclay J."/>
            <person name="Mclaren S."/>
            <person name="McMurray A.A."/>
            <person name="Milne S.A."/>
            <person name="Mortimore B.J."/>
            <person name="Odell C.N."/>
            <person name="Pavitt R."/>
            <person name="Pearce A.V."/>
            <person name="Pearson D."/>
            <person name="Phillimore B.J.C.T."/>
            <person name="Phillips S.H."/>
            <person name="Plumb R.W."/>
            <person name="Ramsay H."/>
            <person name="Ramsey Y."/>
            <person name="Rogers L."/>
            <person name="Ross M.T."/>
            <person name="Scott C.E."/>
            <person name="Sehra H.K."/>
            <person name="Skuce C.D."/>
            <person name="Smalley S."/>
            <person name="Smith M.L."/>
            <person name="Soderlund C."/>
            <person name="Spragon L."/>
            <person name="Steward C.A."/>
            <person name="Sulston J.E."/>
            <person name="Swann R.M."/>
            <person name="Vaudin M."/>
            <person name="Wall M."/>
            <person name="Wallis J.M."/>
            <person name="Whiteley M.N."/>
            <person name="Willey D.L."/>
            <person name="Williams L."/>
            <person name="Williams S.A."/>
            <person name="Williamson H."/>
            <person name="Wilmer T.E."/>
            <person name="Wilming L."/>
            <person name="Wright C.L."/>
            <person name="Hubbard T."/>
            <person name="Bentley D.R."/>
            <person name="Beck S."/>
            <person name="Rogers J."/>
            <person name="Shimizu N."/>
            <person name="Minoshima S."/>
            <person name="Kawasaki K."/>
            <person name="Sasaki T."/>
            <person name="Asakawa S."/>
            <person name="Kudoh J."/>
            <person name="Shintani A."/>
            <person name="Shibuya K."/>
            <person name="Yoshizaki Y."/>
            <person name="Aoki N."/>
            <person name="Mitsuyama S."/>
            <person name="Roe B.A."/>
            <person name="Chen F."/>
            <person name="Chu L."/>
            <person name="Crabtree J."/>
            <person name="Deschamps S."/>
            <person name="Do A."/>
            <person name="Do T."/>
            <person name="Dorman A."/>
            <person name="Fang F."/>
            <person name="Fu Y."/>
            <person name="Hu P."/>
            <person name="Hua A."/>
            <person name="Kenton S."/>
            <person name="Lai H."/>
            <person name="Lao H.I."/>
            <person name="Lewis J."/>
            <person name="Lewis S."/>
            <person name="Lin S.-P."/>
            <person name="Loh P."/>
            <person name="Malaj E."/>
            <person name="Nguyen T."/>
            <person name="Pan H."/>
            <person name="Phan S."/>
            <person name="Qi S."/>
            <person name="Qian Y."/>
            <person name="Ray L."/>
            <person name="Ren Q."/>
            <person name="Shaull S."/>
            <person name="Sloan D."/>
            <person name="Song L."/>
            <person name="Wang Q."/>
            <person name="Wang Y."/>
            <person name="Wang Z."/>
            <person name="White J."/>
            <person name="Willingham D."/>
            <person name="Wu H."/>
            <person name="Yao Z."/>
            <person name="Zhan M."/>
            <person name="Zhang G."/>
            <person name="Chissoe S."/>
            <person name="Murray J."/>
            <person name="Miller N."/>
            <person name="Minx P."/>
            <person name="Fulton R."/>
            <person name="Johnson D."/>
            <person name="Bemis G."/>
            <person name="Bentley D."/>
            <person name="Bradshaw H."/>
            <person name="Bourne S."/>
            <person name="Cordes M."/>
            <person name="Du Z."/>
            <person name="Fulton L."/>
            <person name="Goela D."/>
            <person name="Graves T."/>
            <person name="Hawkins J."/>
            <person name="Hinds K."/>
            <person name="Kemp K."/>
            <person name="Latreille P."/>
            <person name="Layman D."/>
            <person name="Ozersky P."/>
            <person name="Rohlfing T."/>
            <person name="Scheet P."/>
            <person name="Walker C."/>
            <person name="Wamsley A."/>
            <person name="Wohldmann P."/>
            <person name="Pepin K."/>
            <person name="Nelson J."/>
            <person name="Korf I."/>
            <person name="Bedell J.A."/>
            <person name="Hillier L.W."/>
            <person name="Mardis E."/>
            <person name="Waterston R."/>
            <person name="Wilson R."/>
            <person name="Emanuel B.S."/>
            <person name="Shaikh T."/>
            <person name="Kurahashi H."/>
            <person name="Saitta S."/>
            <person name="Budarf M.L."/>
            <person name="McDermid H.E."/>
            <person name="Johnson A."/>
            <person name="Wong A.C.C."/>
            <person name="Morrow B.E."/>
            <person name="Edelmann L."/>
            <person name="Kim U.J."/>
            <person name="Shizuya H."/>
            <person name="Simon M.I."/>
            <person name="Dumanski J.P."/>
            <person name="Peyrard M."/>
            <person name="Kedra D."/>
            <person name="Seroussi E."/>
            <person name="Fransson I."/>
            <person name="Tapia I."/>
            <person name="Bruder C.E."/>
            <person name="O'Brien K.P."/>
            <person name="Wilkinson P."/>
            <person name="Bodenteich A."/>
            <person name="Hartman K."/>
            <person name="Hu X."/>
            <person name="Khan A.S."/>
            <person name="Lane L."/>
            <person name="Tilahun Y."/>
            <person name="Wright H."/>
        </authorList>
    </citation>
    <scope>NUCLEOTIDE SEQUENCE [LARGE SCALE GENOMIC DNA]</scope>
</reference>
<reference key="2">
    <citation type="submission" date="2005-07" db="EMBL/GenBank/DDBJ databases">
        <authorList>
            <person name="Mural R.J."/>
            <person name="Istrail S."/>
            <person name="Sutton G.G."/>
            <person name="Florea L."/>
            <person name="Halpern A.L."/>
            <person name="Mobarry C.M."/>
            <person name="Lippert R."/>
            <person name="Walenz B."/>
            <person name="Shatkay H."/>
            <person name="Dew I."/>
            <person name="Miller J.R."/>
            <person name="Flanigan M.J."/>
            <person name="Edwards N.J."/>
            <person name="Bolanos R."/>
            <person name="Fasulo D."/>
            <person name="Halldorsson B.V."/>
            <person name="Hannenhalli S."/>
            <person name="Turner R."/>
            <person name="Yooseph S."/>
            <person name="Lu F."/>
            <person name="Nusskern D.R."/>
            <person name="Shue B.C."/>
            <person name="Zheng X.H."/>
            <person name="Zhong F."/>
            <person name="Delcher A.L."/>
            <person name="Huson D.H."/>
            <person name="Kravitz S.A."/>
            <person name="Mouchard L."/>
            <person name="Reinert K."/>
            <person name="Remington K.A."/>
            <person name="Clark A.G."/>
            <person name="Waterman M.S."/>
            <person name="Eichler E.E."/>
            <person name="Adams M.D."/>
            <person name="Hunkapiller M.W."/>
            <person name="Myers E.W."/>
            <person name="Venter J.C."/>
        </authorList>
    </citation>
    <scope>NUCLEOTIDE SEQUENCE [LARGE SCALE GENOMIC DNA]</scope>
</reference>
<reference key="3">
    <citation type="journal article" date="2004" name="Genome Res.">
        <title>The status, quality, and expansion of the NIH full-length cDNA project: the Mammalian Gene Collection (MGC).</title>
        <authorList>
            <consortium name="The MGC Project Team"/>
        </authorList>
    </citation>
    <scope>NUCLEOTIDE SEQUENCE [LARGE SCALE MRNA] (ISOFORMS 1 AND 2)</scope>
    <source>
        <tissue>Brain</tissue>
    </source>
</reference>
<reference key="4">
    <citation type="journal article" date="2015" name="J. Biol. Chem.">
        <title>The novel small leucine-rich protein chondroadherin-like (CHADL) is expressed in cartilage and modulates chondrocyte differentiation.</title>
        <authorList>
            <person name="Tillgren V."/>
            <person name="Ho J.C."/>
            <person name="Oennerfjord P."/>
            <person name="Kalamajski S."/>
        </authorList>
    </citation>
    <scope>FUNCTION</scope>
    <scope>INTERACTION WITH COLLAGEN AND COLLAGEN FIBRILS</scope>
    <scope>SUBCELLULAR LOCATION</scope>
</reference>
<organism>
    <name type="scientific">Homo sapiens</name>
    <name type="common">Human</name>
    <dbReference type="NCBI Taxonomy" id="9606"/>
    <lineage>
        <taxon>Eukaryota</taxon>
        <taxon>Metazoa</taxon>
        <taxon>Chordata</taxon>
        <taxon>Craniata</taxon>
        <taxon>Vertebrata</taxon>
        <taxon>Euteleostomi</taxon>
        <taxon>Mammalia</taxon>
        <taxon>Eutheria</taxon>
        <taxon>Euarchontoglires</taxon>
        <taxon>Primates</taxon>
        <taxon>Haplorrhini</taxon>
        <taxon>Catarrhini</taxon>
        <taxon>Hominidae</taxon>
        <taxon>Homo</taxon>
    </lineage>
</organism>
<protein>
    <recommendedName>
        <fullName>Chondroadherin-like protein</fullName>
    </recommendedName>
</protein>
<accession>Q6NUI6</accession>
<accession>Q05CY2</accession>
<accession>Q4G0S0</accession>
<accession>Q5JY13</accession>
<accession>Q86XY1</accession>
<accession>Q96E60</accession>
<name>CHADL_HUMAN</name>
<proteinExistence type="evidence at protein level"/>